<feature type="chain" id="PRO_1000099735" description="3-phosphoshikimate 1-carboxyvinyltransferase">
    <location>
        <begin position="1"/>
        <end position="443"/>
    </location>
</feature>
<feature type="region of interest" description="Disordered" evidence="2">
    <location>
        <begin position="1"/>
        <end position="22"/>
    </location>
</feature>
<feature type="active site" description="Proton acceptor" evidence="1">
    <location>
        <position position="326"/>
    </location>
</feature>
<feature type="binding site" evidence="1">
    <location>
        <position position="28"/>
    </location>
    <ligand>
        <name>3-phosphoshikimate</name>
        <dbReference type="ChEBI" id="CHEBI:145989"/>
    </ligand>
</feature>
<feature type="binding site" evidence="1">
    <location>
        <position position="28"/>
    </location>
    <ligand>
        <name>phosphoenolpyruvate</name>
        <dbReference type="ChEBI" id="CHEBI:58702"/>
    </ligand>
</feature>
<feature type="binding site" evidence="1">
    <location>
        <position position="29"/>
    </location>
    <ligand>
        <name>3-phosphoshikimate</name>
        <dbReference type="ChEBI" id="CHEBI:145989"/>
    </ligand>
</feature>
<feature type="binding site" evidence="1">
    <location>
        <position position="33"/>
    </location>
    <ligand>
        <name>3-phosphoshikimate</name>
        <dbReference type="ChEBI" id="CHEBI:145989"/>
    </ligand>
</feature>
<feature type="binding site" evidence="1">
    <location>
        <position position="101"/>
    </location>
    <ligand>
        <name>phosphoenolpyruvate</name>
        <dbReference type="ChEBI" id="CHEBI:58702"/>
    </ligand>
</feature>
<feature type="binding site" evidence="1">
    <location>
        <position position="129"/>
    </location>
    <ligand>
        <name>phosphoenolpyruvate</name>
        <dbReference type="ChEBI" id="CHEBI:58702"/>
    </ligand>
</feature>
<feature type="binding site" evidence="1">
    <location>
        <position position="174"/>
    </location>
    <ligand>
        <name>3-phosphoshikimate</name>
        <dbReference type="ChEBI" id="CHEBI:145989"/>
    </ligand>
</feature>
<feature type="binding site" evidence="1">
    <location>
        <position position="176"/>
    </location>
    <ligand>
        <name>3-phosphoshikimate</name>
        <dbReference type="ChEBI" id="CHEBI:145989"/>
    </ligand>
</feature>
<feature type="binding site" evidence="1">
    <location>
        <position position="176"/>
    </location>
    <ligand>
        <name>phosphoenolpyruvate</name>
        <dbReference type="ChEBI" id="CHEBI:58702"/>
    </ligand>
</feature>
<feature type="binding site" evidence="1">
    <location>
        <position position="326"/>
    </location>
    <ligand>
        <name>3-phosphoshikimate</name>
        <dbReference type="ChEBI" id="CHEBI:145989"/>
    </ligand>
</feature>
<feature type="binding site" evidence="1">
    <location>
        <position position="353"/>
    </location>
    <ligand>
        <name>3-phosphoshikimate</name>
        <dbReference type="ChEBI" id="CHEBI:145989"/>
    </ligand>
</feature>
<feature type="binding site" evidence="1">
    <location>
        <position position="357"/>
    </location>
    <ligand>
        <name>phosphoenolpyruvate</name>
        <dbReference type="ChEBI" id="CHEBI:58702"/>
    </ligand>
</feature>
<feature type="binding site" evidence="1">
    <location>
        <position position="400"/>
    </location>
    <ligand>
        <name>phosphoenolpyruvate</name>
        <dbReference type="ChEBI" id="CHEBI:58702"/>
    </ligand>
</feature>
<dbReference type="EC" id="2.5.1.19" evidence="1"/>
<dbReference type="EMBL" id="CP001196">
    <property type="protein sequence ID" value="ACI91612.1"/>
    <property type="molecule type" value="Genomic_DNA"/>
</dbReference>
<dbReference type="EMBL" id="CP002826">
    <property type="protein sequence ID" value="AEI04800.1"/>
    <property type="molecule type" value="Genomic_DNA"/>
</dbReference>
<dbReference type="RefSeq" id="WP_012561643.1">
    <property type="nucleotide sequence ID" value="NC_015684.1"/>
</dbReference>
<dbReference type="SMR" id="B6JCN2"/>
<dbReference type="STRING" id="504832.OCA5_c00660"/>
<dbReference type="KEGG" id="oca:OCAR_4467"/>
<dbReference type="KEGG" id="ocg:OCA5_c00660"/>
<dbReference type="PATRIC" id="fig|504832.7.peg.70"/>
<dbReference type="eggNOG" id="COG0128">
    <property type="taxonomic scope" value="Bacteria"/>
</dbReference>
<dbReference type="HOGENOM" id="CLU_024321_0_1_5"/>
<dbReference type="OrthoDB" id="9809920at2"/>
<dbReference type="UniPathway" id="UPA00053">
    <property type="reaction ID" value="UER00089"/>
</dbReference>
<dbReference type="Proteomes" id="UP000007730">
    <property type="component" value="Chromosome"/>
</dbReference>
<dbReference type="GO" id="GO:0005737">
    <property type="term" value="C:cytoplasm"/>
    <property type="evidence" value="ECO:0007669"/>
    <property type="project" value="UniProtKB-SubCell"/>
</dbReference>
<dbReference type="GO" id="GO:0003866">
    <property type="term" value="F:3-phosphoshikimate 1-carboxyvinyltransferase activity"/>
    <property type="evidence" value="ECO:0007669"/>
    <property type="project" value="UniProtKB-UniRule"/>
</dbReference>
<dbReference type="GO" id="GO:0008652">
    <property type="term" value="P:amino acid biosynthetic process"/>
    <property type="evidence" value="ECO:0007669"/>
    <property type="project" value="UniProtKB-KW"/>
</dbReference>
<dbReference type="GO" id="GO:0009073">
    <property type="term" value="P:aromatic amino acid family biosynthetic process"/>
    <property type="evidence" value="ECO:0007669"/>
    <property type="project" value="UniProtKB-KW"/>
</dbReference>
<dbReference type="GO" id="GO:0009423">
    <property type="term" value="P:chorismate biosynthetic process"/>
    <property type="evidence" value="ECO:0007669"/>
    <property type="project" value="UniProtKB-UniRule"/>
</dbReference>
<dbReference type="CDD" id="cd01556">
    <property type="entry name" value="EPSP_synthase"/>
    <property type="match status" value="1"/>
</dbReference>
<dbReference type="FunFam" id="3.65.10.10:FF:000005">
    <property type="entry name" value="3-phosphoshikimate 1-carboxyvinyltransferase"/>
    <property type="match status" value="1"/>
</dbReference>
<dbReference type="FunFam" id="3.65.10.10:FF:000006">
    <property type="entry name" value="3-phosphoshikimate 1-carboxyvinyltransferase"/>
    <property type="match status" value="1"/>
</dbReference>
<dbReference type="Gene3D" id="3.65.10.10">
    <property type="entry name" value="Enolpyruvate transferase domain"/>
    <property type="match status" value="2"/>
</dbReference>
<dbReference type="HAMAP" id="MF_00210">
    <property type="entry name" value="EPSP_synth"/>
    <property type="match status" value="1"/>
</dbReference>
<dbReference type="InterPro" id="IPR001986">
    <property type="entry name" value="Enolpyruvate_Tfrase_dom"/>
</dbReference>
<dbReference type="InterPro" id="IPR036968">
    <property type="entry name" value="Enolpyruvate_Tfrase_sf"/>
</dbReference>
<dbReference type="InterPro" id="IPR006264">
    <property type="entry name" value="EPSP_synthase"/>
</dbReference>
<dbReference type="InterPro" id="IPR023193">
    <property type="entry name" value="EPSP_synthase_CS"/>
</dbReference>
<dbReference type="InterPro" id="IPR013792">
    <property type="entry name" value="RNA3'P_cycl/enolpyr_Trfase_a/b"/>
</dbReference>
<dbReference type="NCBIfam" id="TIGR01356">
    <property type="entry name" value="aroA"/>
    <property type="match status" value="1"/>
</dbReference>
<dbReference type="PANTHER" id="PTHR21090">
    <property type="entry name" value="AROM/DEHYDROQUINATE SYNTHASE"/>
    <property type="match status" value="1"/>
</dbReference>
<dbReference type="PANTHER" id="PTHR21090:SF5">
    <property type="entry name" value="PENTAFUNCTIONAL AROM POLYPEPTIDE"/>
    <property type="match status" value="1"/>
</dbReference>
<dbReference type="Pfam" id="PF00275">
    <property type="entry name" value="EPSP_synthase"/>
    <property type="match status" value="1"/>
</dbReference>
<dbReference type="PIRSF" id="PIRSF000505">
    <property type="entry name" value="EPSPS"/>
    <property type="match status" value="1"/>
</dbReference>
<dbReference type="SUPFAM" id="SSF55205">
    <property type="entry name" value="EPT/RTPC-like"/>
    <property type="match status" value="1"/>
</dbReference>
<dbReference type="PROSITE" id="PS00104">
    <property type="entry name" value="EPSP_SYNTHASE_1"/>
    <property type="match status" value="1"/>
</dbReference>
<dbReference type="PROSITE" id="PS00885">
    <property type="entry name" value="EPSP_SYNTHASE_2"/>
    <property type="match status" value="1"/>
</dbReference>
<keyword id="KW-0028">Amino-acid biosynthesis</keyword>
<keyword id="KW-0057">Aromatic amino acid biosynthesis</keyword>
<keyword id="KW-0963">Cytoplasm</keyword>
<keyword id="KW-1185">Reference proteome</keyword>
<keyword id="KW-0808">Transferase</keyword>
<name>AROA_AFIC5</name>
<evidence type="ECO:0000255" key="1">
    <source>
        <dbReference type="HAMAP-Rule" id="MF_00210"/>
    </source>
</evidence>
<evidence type="ECO:0000256" key="2">
    <source>
        <dbReference type="SAM" id="MobiDB-lite"/>
    </source>
</evidence>
<sequence length="443" mass="46192">MSHASRPTPLEARGSTPLTGRVRVPGDKSISHRALILGALAVGETKITGLLEGEDVLNTAKAMAALGAKVERVGEGAWRVHGVGVGGFRAPDAPLDFGNSGTGCRLAMGAVAGSPIAATFDGDASLRSRPMRRILDPLELMGAKVSGGDGARLPLTLEGARDPIPMVYRTPVASAQIKSAVLLAGLSAPGETTVIEAEASRDHTERMLAQFGADIVTEPEGTHGRRITLTGQPELHGADVVVPADPSSAAFPIVAALIVPGSDLTLTDVMTNPLRTGLFTTLREMGASIEESDVRDAGEPMANLRVRASKLRGVTVPPERAPAMIDEYLVLAVAAAFAEGTTRMLGLKELRVKESDRLEATADMLRVNGVKVEIVGDDLIVHGEGRVPGGGTVATHMDHRIAMSALVMGCASDTPVKVDDTAFIATSFPDFIPMMRGLGADFV</sequence>
<protein>
    <recommendedName>
        <fullName evidence="1">3-phosphoshikimate 1-carboxyvinyltransferase</fullName>
        <ecNumber evidence="1">2.5.1.19</ecNumber>
    </recommendedName>
    <alternativeName>
        <fullName evidence="1">5-enolpyruvylshikimate-3-phosphate synthase</fullName>
        <shortName evidence="1">EPSP synthase</shortName>
        <shortName evidence="1">EPSPS</shortName>
    </alternativeName>
</protein>
<organism>
    <name type="scientific">Afipia carboxidovorans (strain ATCC 49405 / DSM 1227 / KCTC 32145 / OM5)</name>
    <name type="common">Oligotropha carboxidovorans</name>
    <dbReference type="NCBI Taxonomy" id="504832"/>
    <lineage>
        <taxon>Bacteria</taxon>
        <taxon>Pseudomonadati</taxon>
        <taxon>Pseudomonadota</taxon>
        <taxon>Alphaproteobacteria</taxon>
        <taxon>Hyphomicrobiales</taxon>
        <taxon>Nitrobacteraceae</taxon>
        <taxon>Afipia</taxon>
    </lineage>
</organism>
<reference key="1">
    <citation type="journal article" date="2008" name="J. Bacteriol.">
        <title>Genome sequence of the chemolithoautotrophic bacterium Oligotropha carboxidovorans OM5T.</title>
        <authorList>
            <person name="Paul D."/>
            <person name="Bridges S."/>
            <person name="Burgess S.C."/>
            <person name="Dandass Y."/>
            <person name="Lawrence M.L."/>
        </authorList>
    </citation>
    <scope>NUCLEOTIDE SEQUENCE [LARGE SCALE GENOMIC DNA]</scope>
    <source>
        <strain>ATCC 49405 / DSM 1227 / KCTC 32145 / OM5</strain>
    </source>
</reference>
<reference key="2">
    <citation type="journal article" date="2011" name="J. Bacteriol.">
        <title>Complete genome sequences of the chemolithoautotrophic Oligotropha carboxidovorans strains OM4 and OM5.</title>
        <authorList>
            <person name="Volland S."/>
            <person name="Rachinger M."/>
            <person name="Strittmatter A."/>
            <person name="Daniel R."/>
            <person name="Gottschalk G."/>
            <person name="Meyer O."/>
        </authorList>
    </citation>
    <scope>NUCLEOTIDE SEQUENCE [LARGE SCALE GENOMIC DNA]</scope>
    <source>
        <strain>ATCC 49405 / DSM 1227 / KCTC 32145 / OM5</strain>
    </source>
</reference>
<comment type="function">
    <text evidence="1">Catalyzes the transfer of the enolpyruvyl moiety of phosphoenolpyruvate (PEP) to the 5-hydroxyl of shikimate-3-phosphate (S3P) to produce enolpyruvyl shikimate-3-phosphate and inorganic phosphate.</text>
</comment>
<comment type="catalytic activity">
    <reaction evidence="1">
        <text>3-phosphoshikimate + phosphoenolpyruvate = 5-O-(1-carboxyvinyl)-3-phosphoshikimate + phosphate</text>
        <dbReference type="Rhea" id="RHEA:21256"/>
        <dbReference type="ChEBI" id="CHEBI:43474"/>
        <dbReference type="ChEBI" id="CHEBI:57701"/>
        <dbReference type="ChEBI" id="CHEBI:58702"/>
        <dbReference type="ChEBI" id="CHEBI:145989"/>
        <dbReference type="EC" id="2.5.1.19"/>
    </reaction>
    <physiologicalReaction direction="left-to-right" evidence="1">
        <dbReference type="Rhea" id="RHEA:21257"/>
    </physiologicalReaction>
</comment>
<comment type="pathway">
    <text evidence="1">Metabolic intermediate biosynthesis; chorismate biosynthesis; chorismate from D-erythrose 4-phosphate and phosphoenolpyruvate: step 6/7.</text>
</comment>
<comment type="subunit">
    <text evidence="1">Monomer.</text>
</comment>
<comment type="subcellular location">
    <subcellularLocation>
        <location evidence="1">Cytoplasm</location>
    </subcellularLocation>
</comment>
<comment type="similarity">
    <text evidence="1">Belongs to the EPSP synthase family.</text>
</comment>
<proteinExistence type="inferred from homology"/>
<gene>
    <name evidence="1" type="primary">aroA</name>
    <name type="ordered locus">OCAR_4467</name>
    <name type="ordered locus">OCA5_c00660</name>
</gene>
<accession>B6JCN2</accession>
<accession>F8C0A1</accession>